<accession>P27510</accession>
<gene>
    <name type="primary">apaH</name>
</gene>
<evidence type="ECO:0000250" key="1"/>
<evidence type="ECO:0000305" key="2"/>
<organism>
    <name type="scientific">Klebsiella aerogenes</name>
    <name type="common">Enterobacter aerogenes</name>
    <dbReference type="NCBI Taxonomy" id="548"/>
    <lineage>
        <taxon>Bacteria</taxon>
        <taxon>Pseudomonadati</taxon>
        <taxon>Pseudomonadota</taxon>
        <taxon>Gammaproteobacteria</taxon>
        <taxon>Enterobacterales</taxon>
        <taxon>Enterobacteriaceae</taxon>
        <taxon>Klebsiella/Raoultella group</taxon>
        <taxon>Klebsiella</taxon>
    </lineage>
</organism>
<proteinExistence type="inferred from homology"/>
<keyword id="KW-0378">Hydrolase</keyword>
<feature type="chain" id="PRO_0000197994" description="Bis(5'-nucleosyl)-tetraphosphatase, symmetrical">
    <location>
        <begin position="1" status="less than"/>
        <end position="259"/>
    </location>
</feature>
<feature type="non-terminal residue">
    <location>
        <position position="1"/>
    </location>
</feature>
<comment type="function">
    <text evidence="1">Hydrolyzes diadenosine 5',5'''-P1,P4-tetraphosphate to yield ADP.</text>
</comment>
<comment type="catalytic activity">
    <reaction>
        <text>P(1),P(4)-bis(5'-adenosyl) tetraphosphate + H2O = 2 ADP + 2 H(+)</text>
        <dbReference type="Rhea" id="RHEA:24252"/>
        <dbReference type="ChEBI" id="CHEBI:15377"/>
        <dbReference type="ChEBI" id="CHEBI:15378"/>
        <dbReference type="ChEBI" id="CHEBI:58141"/>
        <dbReference type="ChEBI" id="CHEBI:456216"/>
        <dbReference type="EC" id="3.6.1.41"/>
    </reaction>
</comment>
<comment type="similarity">
    <text evidence="2">Belongs to the Ap4A hydrolase family.</text>
</comment>
<sequence length="259" mass="29115">EFDPRRDTLWLTGDLVARGPGSLEVLRYVKSLGDTVRLVLGNHDLHLLAVFAGISRNKPKDRLKPLLEAPDADELLNWLRRQPLLQVDEEKKLVMAHAGITPQWDLETAQQCARDVEAVLSSDSYPFFLDAMYGDMPNHWSNELSGLARLRFISNAFTRMRYCFPNGQLDMYSKEAPEDAPAPLKPWFAIPGPVSNAYSIAFGHWASLEGRGTPEGIYALDTGCCWGGELTCLRWEDKQYFTQPSNRQKSLDEGEAVAS</sequence>
<dbReference type="EC" id="3.6.1.41"/>
<dbReference type="EMBL" id="D10358">
    <property type="protein sequence ID" value="BAA01188.1"/>
    <property type="molecule type" value="Genomic_DNA"/>
</dbReference>
<dbReference type="SMR" id="P27510"/>
<dbReference type="STRING" id="548.EAG7_03292"/>
<dbReference type="GO" id="GO:0008803">
    <property type="term" value="F:bis(5'-nucleosyl)-tetraphosphatase (symmetrical) activity"/>
    <property type="evidence" value="ECO:0007669"/>
    <property type="project" value="UniProtKB-EC"/>
</dbReference>
<dbReference type="CDD" id="cd07422">
    <property type="entry name" value="MPP_ApaH"/>
    <property type="match status" value="1"/>
</dbReference>
<dbReference type="FunFam" id="3.60.21.10:FF:000013">
    <property type="entry name" value="Bis(5'-nucleosyl)-tetraphosphatase, symmetrical"/>
    <property type="match status" value="1"/>
</dbReference>
<dbReference type="Gene3D" id="3.60.21.10">
    <property type="match status" value="1"/>
</dbReference>
<dbReference type="HAMAP" id="MF_00199">
    <property type="entry name" value="ApaH"/>
    <property type="match status" value="1"/>
</dbReference>
<dbReference type="InterPro" id="IPR004617">
    <property type="entry name" value="ApaH"/>
</dbReference>
<dbReference type="InterPro" id="IPR004843">
    <property type="entry name" value="Calcineurin-like_PHP_ApaH"/>
</dbReference>
<dbReference type="InterPro" id="IPR029052">
    <property type="entry name" value="Metallo-depent_PP-like"/>
</dbReference>
<dbReference type="NCBIfam" id="TIGR00668">
    <property type="entry name" value="apaH"/>
    <property type="match status" value="1"/>
</dbReference>
<dbReference type="NCBIfam" id="NF001204">
    <property type="entry name" value="PRK00166.1"/>
    <property type="match status" value="1"/>
</dbReference>
<dbReference type="PANTHER" id="PTHR40942">
    <property type="match status" value="1"/>
</dbReference>
<dbReference type="PANTHER" id="PTHR40942:SF4">
    <property type="entry name" value="CYTOCHROME C5"/>
    <property type="match status" value="1"/>
</dbReference>
<dbReference type="Pfam" id="PF00149">
    <property type="entry name" value="Metallophos"/>
    <property type="match status" value="1"/>
</dbReference>
<dbReference type="PIRSF" id="PIRSF000903">
    <property type="entry name" value="B5n-ttraPtase_sm"/>
    <property type="match status" value="1"/>
</dbReference>
<dbReference type="SUPFAM" id="SSF56300">
    <property type="entry name" value="Metallo-dependent phosphatases"/>
    <property type="match status" value="1"/>
</dbReference>
<name>APAH_KLEAE</name>
<protein>
    <recommendedName>
        <fullName>Bis(5'-nucleosyl)-tetraphosphatase, symmetrical</fullName>
        <ecNumber>3.6.1.41</ecNumber>
    </recommendedName>
    <alternativeName>
        <fullName>Ap4A hydrolase</fullName>
    </alternativeName>
    <alternativeName>
        <fullName>Diadenosine 5',5'''-P1,P4-tetraphosphate pyrophosphohydrolase</fullName>
    </alternativeName>
    <alternativeName>
        <fullName>Diadenosine tetraphosphatase</fullName>
    </alternativeName>
</protein>
<reference key="1">
    <citation type="journal article" date="1992" name="J. Bacteriol.">
        <title>Cloning and nucleotide sequence of a negative regulator gene for Klebsiella aerogenes arylsulfatase synthesis and identification of the gene as folA.</title>
        <authorList>
            <person name="Azakami H."/>
            <person name="Sugino H."/>
            <person name="Murooka Y."/>
        </authorList>
    </citation>
    <scope>NUCLEOTIDE SEQUENCE [GENOMIC DNA]</scope>
    <source>
        <strain>W70</strain>
    </source>
</reference>